<protein>
    <recommendedName>
        <fullName>Probable malate:quinone oxidoreductase</fullName>
        <ecNumber>1.1.5.4</ecNumber>
    </recommendedName>
    <alternativeName>
        <fullName>MQO</fullName>
    </alternativeName>
    <alternativeName>
        <fullName>Malate dehydrogenase [quinone]</fullName>
    </alternativeName>
</protein>
<sequence>GTEVVVDQQKTISALLGASPGASTAAPITLNVLKQMFPQQFNSPEWQSRIHAIVPSYGQKLNGNVALTQQVWDDTAATLQLTKPPVIQMPAAAPTATAKPAETPREASPQHDMAL</sequence>
<proteinExistence type="inferred from homology"/>
<evidence type="ECO:0000250" key="1"/>
<evidence type="ECO:0000256" key="2">
    <source>
        <dbReference type="SAM" id="MobiDB-lite"/>
    </source>
</evidence>
<evidence type="ECO:0000305" key="3"/>
<comment type="catalytic activity">
    <reaction>
        <text>(S)-malate + a quinone = a quinol + oxaloacetate</text>
        <dbReference type="Rhea" id="RHEA:46012"/>
        <dbReference type="ChEBI" id="CHEBI:15589"/>
        <dbReference type="ChEBI" id="CHEBI:16452"/>
        <dbReference type="ChEBI" id="CHEBI:24646"/>
        <dbReference type="ChEBI" id="CHEBI:132124"/>
        <dbReference type="EC" id="1.1.5.4"/>
    </reaction>
</comment>
<comment type="cofactor">
    <cofactor evidence="1">
        <name>FAD</name>
        <dbReference type="ChEBI" id="CHEBI:57692"/>
    </cofactor>
</comment>
<comment type="pathway">
    <text>Carbohydrate metabolism; tricarboxylic acid cycle; oxaloacetate from (S)-malate (quinone route): step 1/1.</text>
</comment>
<comment type="similarity">
    <text evidence="3">Belongs to the MQO family.</text>
</comment>
<accession>O32719</accession>
<dbReference type="EC" id="1.1.5.4"/>
<dbReference type="EMBL" id="U95087">
    <property type="protein sequence ID" value="AAC45463.1"/>
    <property type="molecule type" value="Genomic_DNA"/>
</dbReference>
<dbReference type="SMR" id="O32719"/>
<dbReference type="UniPathway" id="UPA00223">
    <property type="reaction ID" value="UER01008"/>
</dbReference>
<dbReference type="GO" id="GO:0008924">
    <property type="term" value="F:L-malate dehydrogenase (quinone) activity"/>
    <property type="evidence" value="ECO:0007669"/>
    <property type="project" value="UniProtKB-EC"/>
</dbReference>
<dbReference type="GO" id="GO:0006099">
    <property type="term" value="P:tricarboxylic acid cycle"/>
    <property type="evidence" value="ECO:0007669"/>
    <property type="project" value="UniProtKB-UniPathway"/>
</dbReference>
<dbReference type="InterPro" id="IPR006231">
    <property type="entry name" value="MQO"/>
</dbReference>
<dbReference type="Pfam" id="PF06039">
    <property type="entry name" value="Mqo"/>
    <property type="match status" value="1"/>
</dbReference>
<gene>
    <name type="primary">mqo</name>
</gene>
<organism>
    <name type="scientific">Klebsiella pneumoniae</name>
    <dbReference type="NCBI Taxonomy" id="573"/>
    <lineage>
        <taxon>Bacteria</taxon>
        <taxon>Pseudomonadati</taxon>
        <taxon>Pseudomonadota</taxon>
        <taxon>Gammaproteobacteria</taxon>
        <taxon>Enterobacterales</taxon>
        <taxon>Enterobacteriaceae</taxon>
        <taxon>Klebsiella/Raoultella group</taxon>
        <taxon>Klebsiella</taxon>
        <taxon>Klebsiella pneumoniae complex</taxon>
    </lineage>
</organism>
<reference key="1">
    <citation type="journal article" date="1997" name="Eur. J. Biochem.">
        <title>Sequence of a gene cluster from Klebsiella pneumoniae encoding malonate decarboxylase and expression of the enzyme in Escherichia coli.</title>
        <authorList>
            <person name="Hoenke S."/>
            <person name="Schmid M."/>
            <person name="Dimroth P."/>
        </authorList>
    </citation>
    <scope>NUCLEOTIDE SEQUENCE [GENOMIC DNA]</scope>
</reference>
<feature type="chain" id="PRO_0000128719" description="Probable malate:quinone oxidoreductase">
    <location>
        <begin position="1" status="less than"/>
        <end position="115"/>
    </location>
</feature>
<feature type="region of interest" description="Disordered" evidence="2">
    <location>
        <begin position="88"/>
        <end position="115"/>
    </location>
</feature>
<feature type="compositionally biased region" description="Low complexity" evidence="2">
    <location>
        <begin position="90"/>
        <end position="101"/>
    </location>
</feature>
<feature type="compositionally biased region" description="Basic and acidic residues" evidence="2">
    <location>
        <begin position="102"/>
        <end position="115"/>
    </location>
</feature>
<feature type="non-terminal residue">
    <location>
        <position position="1"/>
    </location>
</feature>
<keyword id="KW-0274">FAD</keyword>
<keyword id="KW-0285">Flavoprotein</keyword>
<keyword id="KW-0560">Oxidoreductase</keyword>
<keyword id="KW-0816">Tricarboxylic acid cycle</keyword>
<name>MQO_KLEPN</name>